<feature type="chain" id="PRO_0000375528" description="Succinyl-diaminopimelate desuccinylase">
    <location>
        <begin position="1"/>
        <end position="387"/>
    </location>
</feature>
<feature type="active site" evidence="1">
    <location>
        <position position="77"/>
    </location>
</feature>
<feature type="active site" description="Proton acceptor" evidence="1">
    <location>
        <position position="139"/>
    </location>
</feature>
<feature type="binding site" evidence="1">
    <location>
        <position position="75"/>
    </location>
    <ligand>
        <name>Zn(2+)</name>
        <dbReference type="ChEBI" id="CHEBI:29105"/>
        <label>1</label>
    </ligand>
</feature>
<feature type="binding site" evidence="1">
    <location>
        <position position="108"/>
    </location>
    <ligand>
        <name>Zn(2+)</name>
        <dbReference type="ChEBI" id="CHEBI:29105"/>
        <label>1</label>
    </ligand>
</feature>
<feature type="binding site" evidence="1">
    <location>
        <position position="108"/>
    </location>
    <ligand>
        <name>Zn(2+)</name>
        <dbReference type="ChEBI" id="CHEBI:29105"/>
        <label>2</label>
    </ligand>
</feature>
<feature type="binding site" evidence="1">
    <location>
        <position position="140"/>
    </location>
    <ligand>
        <name>Zn(2+)</name>
        <dbReference type="ChEBI" id="CHEBI:29105"/>
        <label>2</label>
    </ligand>
</feature>
<feature type="binding site" evidence="1">
    <location>
        <position position="168"/>
    </location>
    <ligand>
        <name>Zn(2+)</name>
        <dbReference type="ChEBI" id="CHEBI:29105"/>
        <label>1</label>
    </ligand>
</feature>
<feature type="binding site" evidence="1">
    <location>
        <position position="357"/>
    </location>
    <ligand>
        <name>Zn(2+)</name>
        <dbReference type="ChEBI" id="CHEBI:29105"/>
        <label>2</label>
    </ligand>
</feature>
<name>DAPE_CAUSK</name>
<reference key="1">
    <citation type="submission" date="2008-01" db="EMBL/GenBank/DDBJ databases">
        <title>Complete sequence of chromosome of Caulobacter sp. K31.</title>
        <authorList>
            <consortium name="US DOE Joint Genome Institute"/>
            <person name="Copeland A."/>
            <person name="Lucas S."/>
            <person name="Lapidus A."/>
            <person name="Barry K."/>
            <person name="Glavina del Rio T."/>
            <person name="Dalin E."/>
            <person name="Tice H."/>
            <person name="Pitluck S."/>
            <person name="Bruce D."/>
            <person name="Goodwin L."/>
            <person name="Thompson L.S."/>
            <person name="Brettin T."/>
            <person name="Detter J.C."/>
            <person name="Han C."/>
            <person name="Schmutz J."/>
            <person name="Larimer F."/>
            <person name="Land M."/>
            <person name="Hauser L."/>
            <person name="Kyrpides N."/>
            <person name="Kim E."/>
            <person name="Stephens C."/>
            <person name="Richardson P."/>
        </authorList>
    </citation>
    <scope>NUCLEOTIDE SEQUENCE [LARGE SCALE GENOMIC DNA]</scope>
    <source>
        <strain>K31</strain>
    </source>
</reference>
<keyword id="KW-0028">Amino-acid biosynthesis</keyword>
<keyword id="KW-0170">Cobalt</keyword>
<keyword id="KW-0220">Diaminopimelate biosynthesis</keyword>
<keyword id="KW-0378">Hydrolase</keyword>
<keyword id="KW-0457">Lysine biosynthesis</keyword>
<keyword id="KW-0479">Metal-binding</keyword>
<keyword id="KW-0862">Zinc</keyword>
<proteinExistence type="inferred from homology"/>
<evidence type="ECO:0000255" key="1">
    <source>
        <dbReference type="HAMAP-Rule" id="MF_01690"/>
    </source>
</evidence>
<evidence type="ECO:0000305" key="2"/>
<gene>
    <name evidence="1" type="primary">dapE</name>
    <name type="ordered locus">Caul_4562</name>
</gene>
<dbReference type="EC" id="3.5.1.18" evidence="1"/>
<dbReference type="EMBL" id="CP000927">
    <property type="protein sequence ID" value="ABZ73682.1"/>
    <property type="status" value="ALT_INIT"/>
    <property type="molecule type" value="Genomic_DNA"/>
</dbReference>
<dbReference type="SMR" id="B0T134"/>
<dbReference type="STRING" id="366602.Caul_4562"/>
<dbReference type="KEGG" id="cak:Caul_4562"/>
<dbReference type="eggNOG" id="COG0624">
    <property type="taxonomic scope" value="Bacteria"/>
</dbReference>
<dbReference type="HOGENOM" id="CLU_021802_4_0_5"/>
<dbReference type="OrthoDB" id="9809784at2"/>
<dbReference type="UniPathway" id="UPA00034">
    <property type="reaction ID" value="UER00021"/>
</dbReference>
<dbReference type="GO" id="GO:0008777">
    <property type="term" value="F:acetylornithine deacetylase activity"/>
    <property type="evidence" value="ECO:0007669"/>
    <property type="project" value="TreeGrafter"/>
</dbReference>
<dbReference type="GO" id="GO:0050897">
    <property type="term" value="F:cobalt ion binding"/>
    <property type="evidence" value="ECO:0007669"/>
    <property type="project" value="UniProtKB-UniRule"/>
</dbReference>
<dbReference type="GO" id="GO:0009014">
    <property type="term" value="F:succinyl-diaminopimelate desuccinylase activity"/>
    <property type="evidence" value="ECO:0007669"/>
    <property type="project" value="UniProtKB-UniRule"/>
</dbReference>
<dbReference type="GO" id="GO:0008270">
    <property type="term" value="F:zinc ion binding"/>
    <property type="evidence" value="ECO:0007669"/>
    <property type="project" value="UniProtKB-UniRule"/>
</dbReference>
<dbReference type="GO" id="GO:0019877">
    <property type="term" value="P:diaminopimelate biosynthetic process"/>
    <property type="evidence" value="ECO:0007669"/>
    <property type="project" value="UniProtKB-UniRule"/>
</dbReference>
<dbReference type="GO" id="GO:0006526">
    <property type="term" value="P:L-arginine biosynthetic process"/>
    <property type="evidence" value="ECO:0007669"/>
    <property type="project" value="TreeGrafter"/>
</dbReference>
<dbReference type="GO" id="GO:0009089">
    <property type="term" value="P:lysine biosynthetic process via diaminopimelate"/>
    <property type="evidence" value="ECO:0007669"/>
    <property type="project" value="UniProtKB-UniRule"/>
</dbReference>
<dbReference type="CDD" id="cd03891">
    <property type="entry name" value="M20_DapE_proteobac"/>
    <property type="match status" value="1"/>
</dbReference>
<dbReference type="Gene3D" id="3.40.630.10">
    <property type="entry name" value="Zn peptidases"/>
    <property type="match status" value="2"/>
</dbReference>
<dbReference type="HAMAP" id="MF_01690">
    <property type="entry name" value="DapE"/>
    <property type="match status" value="1"/>
</dbReference>
<dbReference type="InterPro" id="IPR036264">
    <property type="entry name" value="Bact_exopeptidase_dim_dom"/>
</dbReference>
<dbReference type="InterPro" id="IPR005941">
    <property type="entry name" value="DapE_proteobac"/>
</dbReference>
<dbReference type="InterPro" id="IPR002933">
    <property type="entry name" value="Peptidase_M20"/>
</dbReference>
<dbReference type="InterPro" id="IPR011650">
    <property type="entry name" value="Peptidase_M20_dimer"/>
</dbReference>
<dbReference type="InterPro" id="IPR050072">
    <property type="entry name" value="Peptidase_M20A"/>
</dbReference>
<dbReference type="NCBIfam" id="TIGR01246">
    <property type="entry name" value="dapE_proteo"/>
    <property type="match status" value="1"/>
</dbReference>
<dbReference type="NCBIfam" id="NF009557">
    <property type="entry name" value="PRK13009.1"/>
    <property type="match status" value="1"/>
</dbReference>
<dbReference type="PANTHER" id="PTHR43808">
    <property type="entry name" value="ACETYLORNITHINE DEACETYLASE"/>
    <property type="match status" value="1"/>
</dbReference>
<dbReference type="PANTHER" id="PTHR43808:SF31">
    <property type="entry name" value="N-ACETYL-L-CITRULLINE DEACETYLASE"/>
    <property type="match status" value="1"/>
</dbReference>
<dbReference type="Pfam" id="PF07687">
    <property type="entry name" value="M20_dimer"/>
    <property type="match status" value="1"/>
</dbReference>
<dbReference type="Pfam" id="PF01546">
    <property type="entry name" value="Peptidase_M20"/>
    <property type="match status" value="1"/>
</dbReference>
<dbReference type="SUPFAM" id="SSF55031">
    <property type="entry name" value="Bacterial exopeptidase dimerisation domain"/>
    <property type="match status" value="1"/>
</dbReference>
<dbReference type="SUPFAM" id="SSF53187">
    <property type="entry name" value="Zn-dependent exopeptidases"/>
    <property type="match status" value="1"/>
</dbReference>
<dbReference type="PROSITE" id="PS00759">
    <property type="entry name" value="ARGE_DAPE_CPG2_2"/>
    <property type="match status" value="1"/>
</dbReference>
<accession>B0T134</accession>
<comment type="function">
    <text evidence="1">Catalyzes the hydrolysis of N-succinyl-L,L-diaminopimelic acid (SDAP), forming succinate and LL-2,6-diaminopimelate (DAP), an intermediate involved in the bacterial biosynthesis of lysine and meso-diaminopimelic acid, an essential component of bacterial cell walls.</text>
</comment>
<comment type="catalytic activity">
    <reaction evidence="1">
        <text>N-succinyl-(2S,6S)-2,6-diaminopimelate + H2O = (2S,6S)-2,6-diaminopimelate + succinate</text>
        <dbReference type="Rhea" id="RHEA:22608"/>
        <dbReference type="ChEBI" id="CHEBI:15377"/>
        <dbReference type="ChEBI" id="CHEBI:30031"/>
        <dbReference type="ChEBI" id="CHEBI:57609"/>
        <dbReference type="ChEBI" id="CHEBI:58087"/>
        <dbReference type="EC" id="3.5.1.18"/>
    </reaction>
</comment>
<comment type="cofactor">
    <cofactor evidence="1">
        <name>Zn(2+)</name>
        <dbReference type="ChEBI" id="CHEBI:29105"/>
    </cofactor>
    <cofactor evidence="1">
        <name>Co(2+)</name>
        <dbReference type="ChEBI" id="CHEBI:48828"/>
    </cofactor>
    <text evidence="1">Binds 2 Zn(2+) or Co(2+) ions per subunit.</text>
</comment>
<comment type="pathway">
    <text evidence="1">Amino-acid biosynthesis; L-lysine biosynthesis via DAP pathway; LL-2,6-diaminopimelate from (S)-tetrahydrodipicolinate (succinylase route): step 3/3.</text>
</comment>
<comment type="subunit">
    <text evidence="1">Homodimer.</text>
</comment>
<comment type="similarity">
    <text evidence="1">Belongs to the peptidase M20A family. DapE subfamily.</text>
</comment>
<comment type="sequence caution" evidence="2">
    <conflict type="erroneous initiation">
        <sequence resource="EMBL-CDS" id="ABZ73682"/>
    </conflict>
</comment>
<sequence>MTSPAPEPVSIDSVALAQALIRRPSVTPADEGAMDVLQRQLEALGFNCRRMKFGEIENLYARRGTERPNLCFAGHTDVVPVGDSAAWTQGPFEAEIQDGMLYGRGAVDMKSAIAAFVAAVSNLPRDLPGSLSFLITGDEEGVAEDGTVRVVQALAAEGEVIDHCIVGEPTSANLLGDMVKIGRRGSINAWIAVDGRQGHVAYPQRAANPIPVMVDILSRLQSRVLDEGYEGFQPSNLEVTTIDVGNTATNVIPASAKARINIRFNPAHQGKDLRAWIEQECRDAADGFSGRVEALCKIGGEAFLTQPGAFTDVIVAAVGDATGRVPELSTTGGTSDARFIRSLCPVVEFGLVGATMHAVDERVPVQEIRDLANIYQALIGRYFAAFA</sequence>
<organism>
    <name type="scientific">Caulobacter sp. (strain K31)</name>
    <dbReference type="NCBI Taxonomy" id="366602"/>
    <lineage>
        <taxon>Bacteria</taxon>
        <taxon>Pseudomonadati</taxon>
        <taxon>Pseudomonadota</taxon>
        <taxon>Alphaproteobacteria</taxon>
        <taxon>Caulobacterales</taxon>
        <taxon>Caulobacteraceae</taxon>
        <taxon>Caulobacter</taxon>
    </lineage>
</organism>
<protein>
    <recommendedName>
        <fullName evidence="1">Succinyl-diaminopimelate desuccinylase</fullName>
        <shortName evidence="1">SDAP desuccinylase</shortName>
        <ecNumber evidence="1">3.5.1.18</ecNumber>
    </recommendedName>
    <alternativeName>
        <fullName evidence="1">N-succinyl-LL-2,6-diaminoheptanedioate amidohydrolase</fullName>
    </alternativeName>
</protein>